<name>CH60_BACCN</name>
<protein>
    <recommendedName>
        <fullName evidence="1">Chaperonin GroEL</fullName>
        <ecNumber evidence="1">5.6.1.7</ecNumber>
    </recommendedName>
    <alternativeName>
        <fullName evidence="1">60 kDa chaperonin</fullName>
    </alternativeName>
    <alternativeName>
        <fullName evidence="1">Chaperonin-60</fullName>
        <shortName evidence="1">Cpn60</shortName>
    </alternativeName>
</protein>
<feature type="chain" id="PRO_1000082461" description="Chaperonin GroEL">
    <location>
        <begin position="1"/>
        <end position="542"/>
    </location>
</feature>
<feature type="binding site" evidence="1">
    <location>
        <begin position="29"/>
        <end position="32"/>
    </location>
    <ligand>
        <name>ATP</name>
        <dbReference type="ChEBI" id="CHEBI:30616"/>
    </ligand>
</feature>
<feature type="binding site" evidence="1">
    <location>
        <begin position="86"/>
        <end position="90"/>
    </location>
    <ligand>
        <name>ATP</name>
        <dbReference type="ChEBI" id="CHEBI:30616"/>
    </ligand>
</feature>
<feature type="binding site" evidence="1">
    <location>
        <position position="413"/>
    </location>
    <ligand>
        <name>ATP</name>
        <dbReference type="ChEBI" id="CHEBI:30616"/>
    </ligand>
</feature>
<feature type="binding site" evidence="1">
    <location>
        <begin position="476"/>
        <end position="478"/>
    </location>
    <ligand>
        <name>ATP</name>
        <dbReference type="ChEBI" id="CHEBI:30616"/>
    </ligand>
</feature>
<feature type="binding site" evidence="1">
    <location>
        <position position="492"/>
    </location>
    <ligand>
        <name>ATP</name>
        <dbReference type="ChEBI" id="CHEBI:30616"/>
    </ligand>
</feature>
<keyword id="KW-0067">ATP-binding</keyword>
<keyword id="KW-0143">Chaperone</keyword>
<keyword id="KW-0963">Cytoplasm</keyword>
<keyword id="KW-0413">Isomerase</keyword>
<keyword id="KW-0547">Nucleotide-binding</keyword>
<dbReference type="EC" id="5.6.1.7" evidence="1"/>
<dbReference type="EMBL" id="CP000764">
    <property type="protein sequence ID" value="ABS20618.1"/>
    <property type="molecule type" value="Genomic_DNA"/>
</dbReference>
<dbReference type="RefSeq" id="WP_011983377.1">
    <property type="nucleotide sequence ID" value="NC_009674.1"/>
</dbReference>
<dbReference type="SMR" id="A7GKG0"/>
<dbReference type="STRING" id="315749.Bcer98_0252"/>
<dbReference type="GeneID" id="33895596"/>
<dbReference type="KEGG" id="bcy:Bcer98_0252"/>
<dbReference type="eggNOG" id="COG0459">
    <property type="taxonomic scope" value="Bacteria"/>
</dbReference>
<dbReference type="HOGENOM" id="CLU_016503_3_0_9"/>
<dbReference type="OrthoDB" id="9766614at2"/>
<dbReference type="Proteomes" id="UP000002300">
    <property type="component" value="Chromosome"/>
</dbReference>
<dbReference type="GO" id="GO:0005737">
    <property type="term" value="C:cytoplasm"/>
    <property type="evidence" value="ECO:0007669"/>
    <property type="project" value="UniProtKB-SubCell"/>
</dbReference>
<dbReference type="GO" id="GO:0005524">
    <property type="term" value="F:ATP binding"/>
    <property type="evidence" value="ECO:0007669"/>
    <property type="project" value="UniProtKB-UniRule"/>
</dbReference>
<dbReference type="GO" id="GO:0140662">
    <property type="term" value="F:ATP-dependent protein folding chaperone"/>
    <property type="evidence" value="ECO:0007669"/>
    <property type="project" value="InterPro"/>
</dbReference>
<dbReference type="GO" id="GO:0016853">
    <property type="term" value="F:isomerase activity"/>
    <property type="evidence" value="ECO:0007669"/>
    <property type="project" value="UniProtKB-KW"/>
</dbReference>
<dbReference type="GO" id="GO:0051082">
    <property type="term" value="F:unfolded protein binding"/>
    <property type="evidence" value="ECO:0007669"/>
    <property type="project" value="UniProtKB-UniRule"/>
</dbReference>
<dbReference type="GO" id="GO:0042026">
    <property type="term" value="P:protein refolding"/>
    <property type="evidence" value="ECO:0007669"/>
    <property type="project" value="UniProtKB-UniRule"/>
</dbReference>
<dbReference type="CDD" id="cd03344">
    <property type="entry name" value="GroEL"/>
    <property type="match status" value="1"/>
</dbReference>
<dbReference type="FunFam" id="1.10.560.10:FF:000001">
    <property type="entry name" value="60 kDa chaperonin"/>
    <property type="match status" value="1"/>
</dbReference>
<dbReference type="FunFam" id="3.50.7.10:FF:000001">
    <property type="entry name" value="60 kDa chaperonin"/>
    <property type="match status" value="1"/>
</dbReference>
<dbReference type="Gene3D" id="3.50.7.10">
    <property type="entry name" value="GroEL"/>
    <property type="match status" value="1"/>
</dbReference>
<dbReference type="Gene3D" id="1.10.560.10">
    <property type="entry name" value="GroEL-like equatorial domain"/>
    <property type="match status" value="1"/>
</dbReference>
<dbReference type="Gene3D" id="3.30.260.10">
    <property type="entry name" value="TCP-1-like chaperonin intermediate domain"/>
    <property type="match status" value="1"/>
</dbReference>
<dbReference type="HAMAP" id="MF_00600">
    <property type="entry name" value="CH60"/>
    <property type="match status" value="1"/>
</dbReference>
<dbReference type="InterPro" id="IPR018370">
    <property type="entry name" value="Chaperonin_Cpn60_CS"/>
</dbReference>
<dbReference type="InterPro" id="IPR001844">
    <property type="entry name" value="Cpn60/GroEL"/>
</dbReference>
<dbReference type="InterPro" id="IPR002423">
    <property type="entry name" value="Cpn60/GroEL/TCP-1"/>
</dbReference>
<dbReference type="InterPro" id="IPR027409">
    <property type="entry name" value="GroEL-like_apical_dom_sf"/>
</dbReference>
<dbReference type="InterPro" id="IPR027413">
    <property type="entry name" value="GROEL-like_equatorial_sf"/>
</dbReference>
<dbReference type="InterPro" id="IPR027410">
    <property type="entry name" value="TCP-1-like_intermed_sf"/>
</dbReference>
<dbReference type="NCBIfam" id="TIGR02348">
    <property type="entry name" value="GroEL"/>
    <property type="match status" value="1"/>
</dbReference>
<dbReference type="NCBIfam" id="NF000592">
    <property type="entry name" value="PRK00013.1"/>
    <property type="match status" value="1"/>
</dbReference>
<dbReference type="NCBIfam" id="NF009487">
    <property type="entry name" value="PRK12849.1"/>
    <property type="match status" value="1"/>
</dbReference>
<dbReference type="NCBIfam" id="NF009488">
    <property type="entry name" value="PRK12850.1"/>
    <property type="match status" value="1"/>
</dbReference>
<dbReference type="NCBIfam" id="NF009489">
    <property type="entry name" value="PRK12851.1"/>
    <property type="match status" value="1"/>
</dbReference>
<dbReference type="PANTHER" id="PTHR45633">
    <property type="entry name" value="60 KDA HEAT SHOCK PROTEIN, MITOCHONDRIAL"/>
    <property type="match status" value="1"/>
</dbReference>
<dbReference type="Pfam" id="PF00118">
    <property type="entry name" value="Cpn60_TCP1"/>
    <property type="match status" value="1"/>
</dbReference>
<dbReference type="PRINTS" id="PR00298">
    <property type="entry name" value="CHAPERONIN60"/>
</dbReference>
<dbReference type="SUPFAM" id="SSF52029">
    <property type="entry name" value="GroEL apical domain-like"/>
    <property type="match status" value="1"/>
</dbReference>
<dbReference type="SUPFAM" id="SSF48592">
    <property type="entry name" value="GroEL equatorial domain-like"/>
    <property type="match status" value="1"/>
</dbReference>
<dbReference type="SUPFAM" id="SSF54849">
    <property type="entry name" value="GroEL-intermediate domain like"/>
    <property type="match status" value="1"/>
</dbReference>
<dbReference type="PROSITE" id="PS00296">
    <property type="entry name" value="CHAPERONINS_CPN60"/>
    <property type="match status" value="1"/>
</dbReference>
<comment type="function">
    <text evidence="1">Together with its co-chaperonin GroES, plays an essential role in assisting protein folding. The GroEL-GroES system forms a nano-cage that allows encapsulation of the non-native substrate proteins and provides a physical environment optimized to promote and accelerate protein folding.</text>
</comment>
<comment type="catalytic activity">
    <reaction evidence="1">
        <text>ATP + H2O + a folded polypeptide = ADP + phosphate + an unfolded polypeptide.</text>
        <dbReference type="EC" id="5.6.1.7"/>
    </reaction>
</comment>
<comment type="subunit">
    <text evidence="1">Forms a cylinder of 14 subunits composed of two heptameric rings stacked back-to-back. Interacts with the co-chaperonin GroES.</text>
</comment>
<comment type="subcellular location">
    <subcellularLocation>
        <location evidence="1">Cytoplasm</location>
    </subcellularLocation>
</comment>
<comment type="similarity">
    <text evidence="1">Belongs to the chaperonin (HSP60) family.</text>
</comment>
<sequence>MAKDIKFSEEARRSMLRGVDTLANAVKVTLGPKGRNVVLEKKFGSPLITNDGVTIAKEIELEDAFENMGAKLVAEVASKTNDVAGDGTTTATVLAQAMIREGLKNVTAGANPMGLRKGIEKAVATAVEELKTISKPIEGKSSIAQVAAISAADEEVGQLIAEAMERVGNDGVITLEESKGFTTELDVVEGMQFDRGYASPYMITDSDKMEAVLDNPYILITDKKISNIQEILPVLEQVVQQGKPLLIIAEDVEGEALATLVVNKLRGTFNVVAVKAPGFGDRRKAMLEDIAILTDGEVITEELGRDLKSATIESLGRAGKVVVTKENTTIVEGVGSTEQIEARIGQIRAQLEETTSEFDREKLQERLAKLAGGVAVIKVGAATETELKERKLRIEDALNSTRAAVEEGIVAGGGTSLMNVYAKVASIAAEGDEATGINIVLRALEEPVRQIAINAGLEGSVVVERLKGEKVGVGFNAATGEWVNMLESGIVDPAKVTRSALQNAASVAAMFLTTEAVVADKPEENKPAMPDMGAMGGMPGMM</sequence>
<organism>
    <name type="scientific">Bacillus cytotoxicus (strain DSM 22905 / CIP 110041 / 391-98 / NVH 391-98)</name>
    <dbReference type="NCBI Taxonomy" id="315749"/>
    <lineage>
        <taxon>Bacteria</taxon>
        <taxon>Bacillati</taxon>
        <taxon>Bacillota</taxon>
        <taxon>Bacilli</taxon>
        <taxon>Bacillales</taxon>
        <taxon>Bacillaceae</taxon>
        <taxon>Bacillus</taxon>
        <taxon>Bacillus cereus group</taxon>
    </lineage>
</organism>
<accession>A7GKG0</accession>
<proteinExistence type="inferred from homology"/>
<evidence type="ECO:0000255" key="1">
    <source>
        <dbReference type="HAMAP-Rule" id="MF_00600"/>
    </source>
</evidence>
<gene>
    <name evidence="1" type="primary">groEL</name>
    <name evidence="1" type="synonym">groL</name>
    <name type="ordered locus">Bcer98_0252</name>
</gene>
<reference key="1">
    <citation type="journal article" date="2008" name="Chem. Biol. Interact.">
        <title>Extending the Bacillus cereus group genomics to putative food-borne pathogens of different toxicity.</title>
        <authorList>
            <person name="Lapidus A."/>
            <person name="Goltsman E."/>
            <person name="Auger S."/>
            <person name="Galleron N."/>
            <person name="Segurens B."/>
            <person name="Dossat C."/>
            <person name="Land M.L."/>
            <person name="Broussolle V."/>
            <person name="Brillard J."/>
            <person name="Guinebretiere M.-H."/>
            <person name="Sanchis V."/>
            <person name="Nguen-the C."/>
            <person name="Lereclus D."/>
            <person name="Richardson P."/>
            <person name="Wincker P."/>
            <person name="Weissenbach J."/>
            <person name="Ehrlich S.D."/>
            <person name="Sorokin A."/>
        </authorList>
    </citation>
    <scope>NUCLEOTIDE SEQUENCE [LARGE SCALE GENOMIC DNA]</scope>
    <source>
        <strain>DSM 22905 / CIP 110041 / 391-98 / NVH 391-98</strain>
    </source>
</reference>